<reference key="1">
    <citation type="journal article" date="1998" name="DNA Res.">
        <title>Structural analysis of Arabidopsis thaliana chromosome 5. VII. Sequence features of the regions of 1,013,767 bp covered by sixteen physically assigned P1 and TAC clones.</title>
        <authorList>
            <person name="Nakamura Y."/>
            <person name="Sato S."/>
            <person name="Asamizu E."/>
            <person name="Kaneko T."/>
            <person name="Kotani H."/>
            <person name="Miyajima N."/>
            <person name="Tabata S."/>
        </authorList>
    </citation>
    <scope>NUCLEOTIDE SEQUENCE [LARGE SCALE GENOMIC DNA]</scope>
    <source>
        <strain>cv. Columbia</strain>
    </source>
</reference>
<reference key="2">
    <citation type="journal article" date="2017" name="Plant J.">
        <title>Araport11: a complete reannotation of the Arabidopsis thaliana reference genome.</title>
        <authorList>
            <person name="Cheng C.Y."/>
            <person name="Krishnakumar V."/>
            <person name="Chan A.P."/>
            <person name="Thibaud-Nissen F."/>
            <person name="Schobel S."/>
            <person name="Town C.D."/>
        </authorList>
    </citation>
    <scope>GENOME REANNOTATION</scope>
    <source>
        <strain>cv. Columbia</strain>
    </source>
</reference>
<reference key="3">
    <citation type="journal article" date="2003" name="Science">
        <title>Empirical analysis of transcriptional activity in the Arabidopsis genome.</title>
        <authorList>
            <person name="Yamada K."/>
            <person name="Lim J."/>
            <person name="Dale J.M."/>
            <person name="Chen H."/>
            <person name="Shinn P."/>
            <person name="Palm C.J."/>
            <person name="Southwick A.M."/>
            <person name="Wu H.C."/>
            <person name="Kim C.J."/>
            <person name="Nguyen M."/>
            <person name="Pham P.K."/>
            <person name="Cheuk R.F."/>
            <person name="Karlin-Newmann G."/>
            <person name="Liu S.X."/>
            <person name="Lam B."/>
            <person name="Sakano H."/>
            <person name="Wu T."/>
            <person name="Yu G."/>
            <person name="Miranda M."/>
            <person name="Quach H.L."/>
            <person name="Tripp M."/>
            <person name="Chang C.H."/>
            <person name="Lee J.M."/>
            <person name="Toriumi M.J."/>
            <person name="Chan M.M."/>
            <person name="Tang C.C."/>
            <person name="Onodera C.S."/>
            <person name="Deng J.M."/>
            <person name="Akiyama K."/>
            <person name="Ansari Y."/>
            <person name="Arakawa T."/>
            <person name="Banh J."/>
            <person name="Banno F."/>
            <person name="Bowser L."/>
            <person name="Brooks S.Y."/>
            <person name="Carninci P."/>
            <person name="Chao Q."/>
            <person name="Choy N."/>
            <person name="Enju A."/>
            <person name="Goldsmith A.D."/>
            <person name="Gurjal M."/>
            <person name="Hansen N.F."/>
            <person name="Hayashizaki Y."/>
            <person name="Johnson-Hopson C."/>
            <person name="Hsuan V.W."/>
            <person name="Iida K."/>
            <person name="Karnes M."/>
            <person name="Khan S."/>
            <person name="Koesema E."/>
            <person name="Ishida J."/>
            <person name="Jiang P.X."/>
            <person name="Jones T."/>
            <person name="Kawai J."/>
            <person name="Kamiya A."/>
            <person name="Meyers C."/>
            <person name="Nakajima M."/>
            <person name="Narusaka M."/>
            <person name="Seki M."/>
            <person name="Sakurai T."/>
            <person name="Satou M."/>
            <person name="Tamse R."/>
            <person name="Vaysberg M."/>
            <person name="Wallender E.K."/>
            <person name="Wong C."/>
            <person name="Yamamura Y."/>
            <person name="Yuan S."/>
            <person name="Shinozaki K."/>
            <person name="Davis R.W."/>
            <person name="Theologis A."/>
            <person name="Ecker J.R."/>
        </authorList>
    </citation>
    <scope>NUCLEOTIDE SEQUENCE [LARGE SCALE MRNA]</scope>
    <source>
        <strain>cv. Columbia</strain>
    </source>
</reference>
<reference key="4">
    <citation type="submission" date="2002-03" db="EMBL/GenBank/DDBJ databases">
        <title>Full-length cDNA from Arabidopsis thaliana.</title>
        <authorList>
            <person name="Brover V.V."/>
            <person name="Troukhan M.E."/>
            <person name="Alexandrov N.A."/>
            <person name="Lu Y.-P."/>
            <person name="Flavell R.B."/>
            <person name="Feldmann K.A."/>
        </authorList>
    </citation>
    <scope>NUCLEOTIDE SEQUENCE [LARGE SCALE MRNA]</scope>
</reference>
<reference key="5">
    <citation type="journal article" date="2006" name="Plant J.">
        <title>SERRATE is a novel nuclear regulator in primary microRNA processing in Arabidopsis.</title>
        <authorList>
            <person name="Yang L."/>
            <person name="Liu Z."/>
            <person name="Lu F."/>
            <person name="Dong A."/>
            <person name="Huang H."/>
        </authorList>
    </citation>
    <scope>REPRESSION BY TA-SIR850</scope>
</reference>
<reference key="6">
    <citation type="journal article" date="2008" name="J. Gen. Virol.">
        <title>Hibiscus chlorotic ringspot virus coat protein inhibits trans-acting small interfering RNA biogenesis in Arabidopsis.</title>
        <authorList>
            <person name="Meng C."/>
            <person name="Chen J."/>
            <person name="Ding S.-W."/>
            <person name="Peng J."/>
            <person name="Wong S.-M."/>
        </authorList>
    </citation>
    <scope>REPRESSED BY SIRNA255</scope>
    <source>
        <strain>cv. Columbia</strain>
    </source>
</reference>
<reference key="7">
    <citation type="journal article" date="2010" name="Biosci. Biotechnol. Biochem.">
        <title>TAS1 trans-acting siRNA targets are differentially regulated at low temperature, and TAS1 trans-acting siRNA mediates temperature-controlled At1g51670 expression.</title>
        <authorList>
            <person name="Kume K."/>
            <person name="Tsutsumi K."/>
            <person name="Saitoh Y."/>
        </authorList>
    </citation>
    <scope>REPRESSION BY SMALL INTERFERING RNAS</scope>
    <scope>INDUCTION BY COLD</scope>
</reference>
<reference key="8">
    <citation type="journal article" date="2014" name="Plant Cell">
        <title>HEAT-INDUCED TAS1 TARGET1 Mediates Thermotolerance via HEAT STRESS TRANSCRIPTION FACTOR A1a-Directed Pathways in Arabidopsis.</title>
        <authorList>
            <person name="Li S."/>
            <person name="Liu J."/>
            <person name="Liu Z."/>
            <person name="Li X."/>
            <person name="Wu F."/>
            <person name="He Y."/>
        </authorList>
    </citation>
    <scope>FUNCTION</scope>
    <scope>REPRESSION BY SMALL INTERFERING RNAS</scope>
    <scope>INDUCTION BY HEAT SHOCK</scope>
    <scope>TISSUE SPECIFICITY</scope>
    <scope>SUBCELLULAR LOCATION</scope>
    <source>
        <strain>cv. Columbia</strain>
        <strain>cv. Wassilewskija</strain>
    </source>
</reference>
<evidence type="ECO:0000269" key="1">
    <source>
    </source>
</evidence>
<evidence type="ECO:0000269" key="2">
    <source>
    </source>
</evidence>
<evidence type="ECO:0000269" key="3">
    <source>
    </source>
</evidence>
<evidence type="ECO:0000269" key="4">
    <source>
    </source>
</evidence>
<evidence type="ECO:0000303" key="5">
    <source>
    </source>
</evidence>
<evidence type="ECO:0000305" key="6"/>
<evidence type="ECO:0000312" key="7">
    <source>
        <dbReference type="Araport" id="AT5G18040"/>
    </source>
</evidence>
<evidence type="ECO:0000312" key="8">
    <source>
        <dbReference type="EMBL" id="BAB08403.1"/>
    </source>
</evidence>
<sequence length="252" mass="28550">MNMIQRFMQSMAKTRGLCHPDCVKASSEQEDYDASQLSIWWIMLGRKTTREKWMNQALSSLSKTCISIWWKMSGIRGKMCREREQPLTVKDCLECAFKKGLPRREHWAHVGCTFKAPPFACHIPRVPMKGEVIETKSLDEAFKLLIKQPVGARLHVFSPDLDNVGEGVYEGLSSLSRKESRYVGLRDVIIVAVNKSEGKTVATVKICYKKKTSFVKVCLSRMFVQLGGGEESQVKEPTGLLVDFCIPRLSIN</sequence>
<protein>
    <recommendedName>
        <fullName evidence="5">Protein HEAT-INDUCED TAS1 TARGET 2</fullName>
    </recommendedName>
</protein>
<organism>
    <name type="scientific">Arabidopsis thaliana</name>
    <name type="common">Mouse-ear cress</name>
    <dbReference type="NCBI Taxonomy" id="3702"/>
    <lineage>
        <taxon>Eukaryota</taxon>
        <taxon>Viridiplantae</taxon>
        <taxon>Streptophyta</taxon>
        <taxon>Embryophyta</taxon>
        <taxon>Tracheophyta</taxon>
        <taxon>Spermatophyta</taxon>
        <taxon>Magnoliopsida</taxon>
        <taxon>eudicotyledons</taxon>
        <taxon>Gunneridae</taxon>
        <taxon>Pentapetalae</taxon>
        <taxon>rosids</taxon>
        <taxon>malvids</taxon>
        <taxon>Brassicales</taxon>
        <taxon>Brassicaceae</taxon>
        <taxon>Camelineae</taxon>
        <taxon>Arabidopsis</taxon>
    </lineage>
</organism>
<accession>Q9FJF8</accession>
<accession>Q8LCY9</accession>
<keyword id="KW-0963">Cytoplasm</keyword>
<keyword id="KW-0539">Nucleus</keyword>
<keyword id="KW-1185">Reference proteome</keyword>
<dbReference type="EMBL" id="AB015473">
    <property type="protein sequence ID" value="BAB08403.1"/>
    <property type="molecule type" value="Genomic_DNA"/>
</dbReference>
<dbReference type="EMBL" id="CP002688">
    <property type="protein sequence ID" value="AED92499.1"/>
    <property type="molecule type" value="Genomic_DNA"/>
</dbReference>
<dbReference type="EMBL" id="AY050965">
    <property type="protein sequence ID" value="AAK93642.1"/>
    <property type="molecule type" value="mRNA"/>
</dbReference>
<dbReference type="EMBL" id="AY096752">
    <property type="protein sequence ID" value="AAM20386.1"/>
    <property type="molecule type" value="mRNA"/>
</dbReference>
<dbReference type="EMBL" id="AY086314">
    <property type="protein sequence ID" value="AAM64385.1"/>
    <property type="status" value="ALT_INIT"/>
    <property type="molecule type" value="mRNA"/>
</dbReference>
<dbReference type="RefSeq" id="NP_197305.1">
    <property type="nucleotide sequence ID" value="NM_121809.3"/>
</dbReference>
<dbReference type="SMR" id="Q9FJF8"/>
<dbReference type="FunCoup" id="Q9FJF8">
    <property type="interactions" value="4"/>
</dbReference>
<dbReference type="STRING" id="3702.Q9FJF8"/>
<dbReference type="PaxDb" id="3702-AT5G18040.1"/>
<dbReference type="EnsemblPlants" id="AT5G18040.1">
    <property type="protein sequence ID" value="AT5G18040.1"/>
    <property type="gene ID" value="AT5G18040"/>
</dbReference>
<dbReference type="GeneID" id="831925"/>
<dbReference type="Gramene" id="AT5G18040.1">
    <property type="protein sequence ID" value="AT5G18040.1"/>
    <property type="gene ID" value="AT5G18040"/>
</dbReference>
<dbReference type="KEGG" id="ath:AT5G18040"/>
<dbReference type="Araport" id="AT5G18040"/>
<dbReference type="TAIR" id="AT5G18040">
    <property type="gene designation" value="HTT2"/>
</dbReference>
<dbReference type="HOGENOM" id="CLU_1005918_0_0_1"/>
<dbReference type="InParanoid" id="Q9FJF8"/>
<dbReference type="PhylomeDB" id="Q9FJF8"/>
<dbReference type="PRO" id="PR:Q9FJF8"/>
<dbReference type="Proteomes" id="UP000006548">
    <property type="component" value="Chromosome 5"/>
</dbReference>
<dbReference type="ExpressionAtlas" id="Q9FJF8">
    <property type="expression patterns" value="baseline and differential"/>
</dbReference>
<dbReference type="GO" id="GO:0005737">
    <property type="term" value="C:cytoplasm"/>
    <property type="evidence" value="ECO:0000314"/>
    <property type="project" value="UniProtKB"/>
</dbReference>
<dbReference type="GO" id="GO:0005634">
    <property type="term" value="C:nucleus"/>
    <property type="evidence" value="ECO:0000314"/>
    <property type="project" value="UniProtKB"/>
</dbReference>
<dbReference type="GO" id="GO:0010286">
    <property type="term" value="P:heat acclimation"/>
    <property type="evidence" value="ECO:0000315"/>
    <property type="project" value="UniProtKB"/>
</dbReference>
<dbReference type="GO" id="GO:0009409">
    <property type="term" value="P:response to cold"/>
    <property type="evidence" value="ECO:0000270"/>
    <property type="project" value="UniProtKB"/>
</dbReference>
<dbReference type="GO" id="GO:0009408">
    <property type="term" value="P:response to heat"/>
    <property type="evidence" value="ECO:0000270"/>
    <property type="project" value="UniProtKB"/>
</dbReference>
<dbReference type="GO" id="GO:0006979">
    <property type="term" value="P:response to oxidative stress"/>
    <property type="evidence" value="ECO:0000315"/>
    <property type="project" value="TAIR"/>
</dbReference>
<comment type="function">
    <text evidence="4">Mediates both basal and acquired thermotolerance via HSFA1s-directed pathways (e.g. HSFA1A, HSFA1B, and HSFA1D). Triggers the expression of HSFA1A and HSFA1B.</text>
</comment>
<comment type="subcellular location">
    <subcellularLocation>
        <location evidence="4">Cytoplasm</location>
    </subcellularLocation>
    <subcellularLocation>
        <location evidence="4">Nucleus</location>
    </subcellularLocation>
</comment>
<comment type="tissue specificity">
    <text evidence="4">Expressed ubiquitously, including in seedlings, leaves, stems, inflorescences and siliques.</text>
</comment>
<comment type="induction">
    <text evidence="1 2 3 4">Target of TAS1 (trans-acting siRNA precursor 1)-derived small interfering RNAs in response to temperature variations, thus reducing both basal and acquired thermotolerance (PubMed:20622450, PubMed:24728648). Up-regulated by cold (at 4 degrees Celsius) (PubMed:20622450). Repressed by trans-acting small interfering RNA (ta-siRNAs) siR850/siRNA255-mediated transcript cleavage (PubMed:16889646, PubMed:18753245). Highly up-regulated in seedlings exposed to heat shock. Induced by HSFA1s-mediated (e.g. HSFA1A, HSFA1B, and HSFA1D) promoter activation (PubMed:24728648).</text>
</comment>
<comment type="similarity">
    <text evidence="6">Belongs to the heat induced plant HTT protein family.</text>
</comment>
<comment type="sequence caution" evidence="6">
    <conflict type="erroneous initiation">
        <sequence resource="EMBL-CDS" id="AAM64385"/>
    </conflict>
    <text>Truncated N-terminus.</text>
</comment>
<gene>
    <name evidence="5" type="primary">HTT2</name>
    <name evidence="7" type="ordered locus">At5g18040</name>
    <name evidence="8" type="ORF">MCM23.14</name>
</gene>
<proteinExistence type="evidence at transcript level"/>
<name>HTT2_ARATH</name>
<feature type="chain" id="PRO_0000439260" description="Protein HEAT-INDUCED TAS1 TARGET 2">
    <location>
        <begin position="1"/>
        <end position="252"/>
    </location>
</feature>
<feature type="sequence conflict" description="In Ref. 4; AAM64385." evidence="6" ref="4">
    <original>R</original>
    <variation>K</variation>
    <location>
        <position position="83"/>
    </location>
</feature>
<feature type="sequence conflict" description="In Ref. 4; AAM64385." evidence="6" ref="4">
    <original>R</original>
    <variation>I</variation>
    <location>
        <position position="103"/>
    </location>
</feature>